<comment type="function">
    <text evidence="1">Catalyzes the condensation of (S)-aspartate-beta-semialdehyde [(S)-ASA] and pyruvate to 4-hydroxy-tetrahydrodipicolinate (HTPA).</text>
</comment>
<comment type="catalytic activity">
    <reaction evidence="1">
        <text>L-aspartate 4-semialdehyde + pyruvate = (2S,4S)-4-hydroxy-2,3,4,5-tetrahydrodipicolinate + H2O + H(+)</text>
        <dbReference type="Rhea" id="RHEA:34171"/>
        <dbReference type="ChEBI" id="CHEBI:15361"/>
        <dbReference type="ChEBI" id="CHEBI:15377"/>
        <dbReference type="ChEBI" id="CHEBI:15378"/>
        <dbReference type="ChEBI" id="CHEBI:67139"/>
        <dbReference type="ChEBI" id="CHEBI:537519"/>
        <dbReference type="EC" id="4.3.3.7"/>
    </reaction>
</comment>
<comment type="pathway">
    <text evidence="1">Amino-acid biosynthesis; L-lysine biosynthesis via DAP pathway; (S)-tetrahydrodipicolinate from L-aspartate: step 3/4.</text>
</comment>
<comment type="subunit">
    <text evidence="1">Homotetramer; dimer of dimers.</text>
</comment>
<comment type="subcellular location">
    <subcellularLocation>
        <location evidence="1">Cytoplasm</location>
    </subcellularLocation>
</comment>
<comment type="similarity">
    <text evidence="1">Belongs to the DapA family.</text>
</comment>
<comment type="caution">
    <text evidence="2">Was originally thought to be a dihydrodipicolinate synthase (DHDPS), catalyzing the condensation of (S)-aspartate-beta-semialdehyde [(S)-ASA] and pyruvate to dihydrodipicolinate (DHDP). However, it was shown in E.coli that the product of the enzymatic reaction is not dihydrodipicolinate but in fact (4S)-4-hydroxy-2,3,4,5-tetrahydro-(2S)-dipicolinic acid (HTPA), and that the consecutive dehydration reaction leading to DHDP is not spontaneous but catalyzed by DapB.</text>
</comment>
<reference key="1">
    <citation type="journal article" date="2007" name="Nat. Biotechnol.">
        <title>Complete genome sequence of the fish pathogen Flavobacterium psychrophilum.</title>
        <authorList>
            <person name="Duchaud E."/>
            <person name="Boussaha M."/>
            <person name="Loux V."/>
            <person name="Bernardet J.-F."/>
            <person name="Michel C."/>
            <person name="Kerouault B."/>
            <person name="Mondot S."/>
            <person name="Nicolas P."/>
            <person name="Bossy R."/>
            <person name="Caron C."/>
            <person name="Bessieres P."/>
            <person name="Gibrat J.-F."/>
            <person name="Claverol S."/>
            <person name="Dumetz F."/>
            <person name="Le Henaff M."/>
            <person name="Benmansour A."/>
        </authorList>
    </citation>
    <scope>NUCLEOTIDE SEQUENCE [LARGE SCALE GENOMIC DNA]</scope>
    <source>
        <strain>ATCC 49511 / DSM 21280 / CIP 103535 / JIP02/86</strain>
    </source>
</reference>
<evidence type="ECO:0000255" key="1">
    <source>
        <dbReference type="HAMAP-Rule" id="MF_00418"/>
    </source>
</evidence>
<evidence type="ECO:0000305" key="2"/>
<name>DAPA_FLAPJ</name>
<dbReference type="EC" id="4.3.3.7" evidence="1"/>
<dbReference type="EMBL" id="AM398681">
    <property type="protein sequence ID" value="CAL43902.1"/>
    <property type="molecule type" value="Genomic_DNA"/>
</dbReference>
<dbReference type="RefSeq" id="WP_011963941.1">
    <property type="nucleotide sequence ID" value="NC_009613.3"/>
</dbReference>
<dbReference type="RefSeq" id="YP_001296705.1">
    <property type="nucleotide sequence ID" value="NC_009613.3"/>
</dbReference>
<dbReference type="SMR" id="A6H0M8"/>
<dbReference type="STRING" id="402612.FP1836"/>
<dbReference type="EnsemblBacteria" id="CAL43902">
    <property type="protein sequence ID" value="CAL43902"/>
    <property type="gene ID" value="FP1836"/>
</dbReference>
<dbReference type="GeneID" id="66551979"/>
<dbReference type="KEGG" id="fps:FP1836"/>
<dbReference type="PATRIC" id="fig|402612.5.peg.1863"/>
<dbReference type="eggNOG" id="COG0329">
    <property type="taxonomic scope" value="Bacteria"/>
</dbReference>
<dbReference type="HOGENOM" id="CLU_049343_7_1_10"/>
<dbReference type="OrthoDB" id="9782828at2"/>
<dbReference type="UniPathway" id="UPA00034">
    <property type="reaction ID" value="UER00017"/>
</dbReference>
<dbReference type="Proteomes" id="UP000006394">
    <property type="component" value="Chromosome"/>
</dbReference>
<dbReference type="GO" id="GO:0005829">
    <property type="term" value="C:cytosol"/>
    <property type="evidence" value="ECO:0007669"/>
    <property type="project" value="TreeGrafter"/>
</dbReference>
<dbReference type="GO" id="GO:0008840">
    <property type="term" value="F:4-hydroxy-tetrahydrodipicolinate synthase activity"/>
    <property type="evidence" value="ECO:0007669"/>
    <property type="project" value="UniProtKB-UniRule"/>
</dbReference>
<dbReference type="GO" id="GO:0019877">
    <property type="term" value="P:diaminopimelate biosynthetic process"/>
    <property type="evidence" value="ECO:0007669"/>
    <property type="project" value="UniProtKB-UniRule"/>
</dbReference>
<dbReference type="GO" id="GO:0009089">
    <property type="term" value="P:lysine biosynthetic process via diaminopimelate"/>
    <property type="evidence" value="ECO:0007669"/>
    <property type="project" value="UniProtKB-UniRule"/>
</dbReference>
<dbReference type="CDD" id="cd00950">
    <property type="entry name" value="DHDPS"/>
    <property type="match status" value="1"/>
</dbReference>
<dbReference type="Gene3D" id="3.20.20.70">
    <property type="entry name" value="Aldolase class I"/>
    <property type="match status" value="1"/>
</dbReference>
<dbReference type="HAMAP" id="MF_00418">
    <property type="entry name" value="DapA"/>
    <property type="match status" value="1"/>
</dbReference>
<dbReference type="InterPro" id="IPR013785">
    <property type="entry name" value="Aldolase_TIM"/>
</dbReference>
<dbReference type="InterPro" id="IPR005263">
    <property type="entry name" value="DapA"/>
</dbReference>
<dbReference type="InterPro" id="IPR002220">
    <property type="entry name" value="DapA-like"/>
</dbReference>
<dbReference type="InterPro" id="IPR020625">
    <property type="entry name" value="Schiff_base-form_aldolases_AS"/>
</dbReference>
<dbReference type="NCBIfam" id="TIGR00674">
    <property type="entry name" value="dapA"/>
    <property type="match status" value="1"/>
</dbReference>
<dbReference type="PANTHER" id="PTHR12128:SF66">
    <property type="entry name" value="4-HYDROXY-2-OXOGLUTARATE ALDOLASE, MITOCHONDRIAL"/>
    <property type="match status" value="1"/>
</dbReference>
<dbReference type="PANTHER" id="PTHR12128">
    <property type="entry name" value="DIHYDRODIPICOLINATE SYNTHASE"/>
    <property type="match status" value="1"/>
</dbReference>
<dbReference type="Pfam" id="PF00701">
    <property type="entry name" value="DHDPS"/>
    <property type="match status" value="1"/>
</dbReference>
<dbReference type="PIRSF" id="PIRSF001365">
    <property type="entry name" value="DHDPS"/>
    <property type="match status" value="1"/>
</dbReference>
<dbReference type="PRINTS" id="PR00146">
    <property type="entry name" value="DHPICSNTHASE"/>
</dbReference>
<dbReference type="SMART" id="SM01130">
    <property type="entry name" value="DHDPS"/>
    <property type="match status" value="1"/>
</dbReference>
<dbReference type="SUPFAM" id="SSF51569">
    <property type="entry name" value="Aldolase"/>
    <property type="match status" value="1"/>
</dbReference>
<dbReference type="PROSITE" id="PS00666">
    <property type="entry name" value="DHDPS_2"/>
    <property type="match status" value="1"/>
</dbReference>
<proteinExistence type="inferred from homology"/>
<feature type="chain" id="PRO_0000340952" description="4-hydroxy-tetrahydrodipicolinate synthase">
    <location>
        <begin position="1"/>
        <end position="293"/>
    </location>
</feature>
<feature type="active site" description="Proton donor/acceptor" evidence="1">
    <location>
        <position position="135"/>
    </location>
</feature>
<feature type="active site" description="Schiff-base intermediate with substrate" evidence="1">
    <location>
        <position position="164"/>
    </location>
</feature>
<feature type="binding site" evidence="1">
    <location>
        <position position="47"/>
    </location>
    <ligand>
        <name>pyruvate</name>
        <dbReference type="ChEBI" id="CHEBI:15361"/>
    </ligand>
</feature>
<feature type="binding site" evidence="1">
    <location>
        <position position="206"/>
    </location>
    <ligand>
        <name>pyruvate</name>
        <dbReference type="ChEBI" id="CHEBI:15361"/>
    </ligand>
</feature>
<feature type="site" description="Part of a proton relay during catalysis" evidence="1">
    <location>
        <position position="46"/>
    </location>
</feature>
<feature type="site" description="Part of a proton relay during catalysis" evidence="1">
    <location>
        <position position="109"/>
    </location>
</feature>
<accession>A6H0M8</accession>
<gene>
    <name evidence="1" type="primary">dapA</name>
    <name type="ordered locus">FP1836</name>
</gene>
<organism>
    <name type="scientific">Flavobacterium psychrophilum (strain ATCC 49511 / DSM 21280 / CIP 103535 / JIP02/86)</name>
    <dbReference type="NCBI Taxonomy" id="402612"/>
    <lineage>
        <taxon>Bacteria</taxon>
        <taxon>Pseudomonadati</taxon>
        <taxon>Bacteroidota</taxon>
        <taxon>Flavobacteriia</taxon>
        <taxon>Flavobacteriales</taxon>
        <taxon>Flavobacteriaceae</taxon>
        <taxon>Flavobacterium</taxon>
    </lineage>
</organism>
<sequence length="293" mass="32076">MQAFIGTGVALVTPFKKDFSVDTQALKRIVNYVIDGGVEYLVVLGTTAESATLSQDEKELVIATIVDANNGRLPLVLGIGGNNTMKVVEELKTRDFSKFSAVLSVSPYYNKPTQEGIYQHFKMVAEASPIPVILYNVPGRTASNMLPETVLRLAKDFKNLIGIKEAAGDIVQAMKLIQGKPKDFLVISGDDMITLPMILAGGSGVISVIGEGYPKEFSQMVRLGLQRKVDEAYILHYKLMNSIDMIFEQGNPSGVKEIFKSLGLSENTVRLPLVSVNEDLSNRLDLFTKQLSK</sequence>
<keyword id="KW-0028">Amino-acid biosynthesis</keyword>
<keyword id="KW-0963">Cytoplasm</keyword>
<keyword id="KW-0220">Diaminopimelate biosynthesis</keyword>
<keyword id="KW-0456">Lyase</keyword>
<keyword id="KW-0457">Lysine biosynthesis</keyword>
<keyword id="KW-1185">Reference proteome</keyword>
<keyword id="KW-0704">Schiff base</keyword>
<protein>
    <recommendedName>
        <fullName evidence="1">4-hydroxy-tetrahydrodipicolinate synthase</fullName>
        <shortName evidence="1">HTPA synthase</shortName>
        <ecNumber evidence="1">4.3.3.7</ecNumber>
    </recommendedName>
</protein>